<comment type="function">
    <text evidence="1">Catalyzes the conversion of L-lactate to pyruvate. Is coupled to the respiratory chain.</text>
</comment>
<comment type="catalytic activity">
    <reaction evidence="1">
        <text>(S)-lactate + A = pyruvate + AH2</text>
        <dbReference type="Rhea" id="RHEA:45816"/>
        <dbReference type="ChEBI" id="CHEBI:13193"/>
        <dbReference type="ChEBI" id="CHEBI:15361"/>
        <dbReference type="ChEBI" id="CHEBI:16651"/>
        <dbReference type="ChEBI" id="CHEBI:17499"/>
    </reaction>
</comment>
<comment type="cofactor">
    <cofactor evidence="1">
        <name>FMN</name>
        <dbReference type="ChEBI" id="CHEBI:58210"/>
    </cofactor>
</comment>
<comment type="subcellular location">
    <subcellularLocation>
        <location evidence="1">Cell inner membrane</location>
        <topology evidence="1">Peripheral membrane protein</topology>
    </subcellularLocation>
</comment>
<comment type="similarity">
    <text evidence="1">Belongs to the FMN-dependent alpha-hydroxy acid dehydrogenase family.</text>
</comment>
<organism>
    <name type="scientific">Chromohalobacter salexigens (strain ATCC BAA-138 / DSM 3043 / CIP 106854 / NCIMB 13768 / 1H11)</name>
    <dbReference type="NCBI Taxonomy" id="290398"/>
    <lineage>
        <taxon>Bacteria</taxon>
        <taxon>Pseudomonadati</taxon>
        <taxon>Pseudomonadota</taxon>
        <taxon>Gammaproteobacteria</taxon>
        <taxon>Oceanospirillales</taxon>
        <taxon>Halomonadaceae</taxon>
        <taxon>Chromohalobacter</taxon>
    </lineage>
</organism>
<accession>Q1R0J2</accession>
<name>LLDD_CHRSD</name>
<dbReference type="EC" id="1.1.-.-" evidence="1"/>
<dbReference type="EMBL" id="CP000285">
    <property type="protein sequence ID" value="ABE57766.1"/>
    <property type="molecule type" value="Genomic_DNA"/>
</dbReference>
<dbReference type="RefSeq" id="WP_011505712.1">
    <property type="nucleotide sequence ID" value="NC_007963.1"/>
</dbReference>
<dbReference type="SMR" id="Q1R0J2"/>
<dbReference type="STRING" id="290398.Csal_0404"/>
<dbReference type="GeneID" id="95333148"/>
<dbReference type="KEGG" id="csa:Csal_0404"/>
<dbReference type="eggNOG" id="COG1304">
    <property type="taxonomic scope" value="Bacteria"/>
</dbReference>
<dbReference type="HOGENOM" id="CLU_020639_0_0_6"/>
<dbReference type="OrthoDB" id="9770452at2"/>
<dbReference type="Proteomes" id="UP000000239">
    <property type="component" value="Chromosome"/>
</dbReference>
<dbReference type="GO" id="GO:0005886">
    <property type="term" value="C:plasma membrane"/>
    <property type="evidence" value="ECO:0007669"/>
    <property type="project" value="UniProtKB-SubCell"/>
</dbReference>
<dbReference type="GO" id="GO:0010181">
    <property type="term" value="F:FMN binding"/>
    <property type="evidence" value="ECO:0007669"/>
    <property type="project" value="InterPro"/>
</dbReference>
<dbReference type="GO" id="GO:0004459">
    <property type="term" value="F:L-lactate dehydrogenase activity"/>
    <property type="evidence" value="ECO:0007669"/>
    <property type="project" value="UniProtKB-UniRule"/>
</dbReference>
<dbReference type="GO" id="GO:0009060">
    <property type="term" value="P:aerobic respiration"/>
    <property type="evidence" value="ECO:0007669"/>
    <property type="project" value="TreeGrafter"/>
</dbReference>
<dbReference type="GO" id="GO:0006089">
    <property type="term" value="P:lactate metabolic process"/>
    <property type="evidence" value="ECO:0007669"/>
    <property type="project" value="UniProtKB-UniRule"/>
</dbReference>
<dbReference type="CDD" id="cd02809">
    <property type="entry name" value="alpha_hydroxyacid_oxid_FMN"/>
    <property type="match status" value="1"/>
</dbReference>
<dbReference type="FunFam" id="3.20.20.70:FF:000029">
    <property type="entry name" value="L-lactate dehydrogenase"/>
    <property type="match status" value="1"/>
</dbReference>
<dbReference type="Gene3D" id="3.20.20.70">
    <property type="entry name" value="Aldolase class I"/>
    <property type="match status" value="1"/>
</dbReference>
<dbReference type="HAMAP" id="MF_01559">
    <property type="entry name" value="L_lact_dehydr"/>
    <property type="match status" value="1"/>
</dbReference>
<dbReference type="InterPro" id="IPR013785">
    <property type="entry name" value="Aldolase_TIM"/>
</dbReference>
<dbReference type="InterPro" id="IPR012133">
    <property type="entry name" value="Alpha-hydoxy_acid_DH_FMN"/>
</dbReference>
<dbReference type="InterPro" id="IPR000262">
    <property type="entry name" value="FMN-dep_DH"/>
</dbReference>
<dbReference type="InterPro" id="IPR037396">
    <property type="entry name" value="FMN_HAD"/>
</dbReference>
<dbReference type="InterPro" id="IPR008259">
    <property type="entry name" value="FMN_hydac_DH_AS"/>
</dbReference>
<dbReference type="InterPro" id="IPR020920">
    <property type="entry name" value="LldD"/>
</dbReference>
<dbReference type="NCBIfam" id="NF033901">
    <property type="entry name" value="L_lactate_LldD"/>
    <property type="match status" value="1"/>
</dbReference>
<dbReference type="NCBIfam" id="NF008398">
    <property type="entry name" value="PRK11197.1"/>
    <property type="match status" value="1"/>
</dbReference>
<dbReference type="PANTHER" id="PTHR10578:SF85">
    <property type="entry name" value="L-LACTATE DEHYDROGENASE"/>
    <property type="match status" value="1"/>
</dbReference>
<dbReference type="PANTHER" id="PTHR10578">
    <property type="entry name" value="S -2-HYDROXY-ACID OXIDASE-RELATED"/>
    <property type="match status" value="1"/>
</dbReference>
<dbReference type="Pfam" id="PF01070">
    <property type="entry name" value="FMN_dh"/>
    <property type="match status" value="1"/>
</dbReference>
<dbReference type="PIRSF" id="PIRSF000138">
    <property type="entry name" value="Al-hdrx_acd_dh"/>
    <property type="match status" value="1"/>
</dbReference>
<dbReference type="SUPFAM" id="SSF51395">
    <property type="entry name" value="FMN-linked oxidoreductases"/>
    <property type="match status" value="1"/>
</dbReference>
<dbReference type="PROSITE" id="PS00557">
    <property type="entry name" value="FMN_HYDROXY_ACID_DH_1"/>
    <property type="match status" value="1"/>
</dbReference>
<dbReference type="PROSITE" id="PS51349">
    <property type="entry name" value="FMN_HYDROXY_ACID_DH_2"/>
    <property type="match status" value="1"/>
</dbReference>
<proteinExistence type="inferred from homology"/>
<evidence type="ECO:0000255" key="1">
    <source>
        <dbReference type="HAMAP-Rule" id="MF_01559"/>
    </source>
</evidence>
<protein>
    <recommendedName>
        <fullName evidence="1">L-lactate dehydrogenase</fullName>
        <ecNumber evidence="1">1.1.-.-</ecNumber>
    </recommendedName>
</protein>
<gene>
    <name evidence="1" type="primary">lldD</name>
    <name type="ordered locus">Csal_0404</name>
</gene>
<reference key="1">
    <citation type="journal article" date="2011" name="Stand. Genomic Sci.">
        <title>Complete genome sequence of the halophilic and highly halotolerant Chromohalobacter salexigens type strain (1H11(T)).</title>
        <authorList>
            <person name="Copeland A."/>
            <person name="O'Connor K."/>
            <person name="Lucas S."/>
            <person name="Lapidus A."/>
            <person name="Berry K.W."/>
            <person name="Detter J.C."/>
            <person name="Del Rio T.G."/>
            <person name="Hammon N."/>
            <person name="Dalin E."/>
            <person name="Tice H."/>
            <person name="Pitluck S."/>
            <person name="Bruce D."/>
            <person name="Goodwin L."/>
            <person name="Han C."/>
            <person name="Tapia R."/>
            <person name="Saunders E."/>
            <person name="Schmutz J."/>
            <person name="Brettin T."/>
            <person name="Larimer F."/>
            <person name="Land M."/>
            <person name="Hauser L."/>
            <person name="Vargas C."/>
            <person name="Nieto J.J."/>
            <person name="Kyrpides N.C."/>
            <person name="Ivanova N."/>
            <person name="Goker M."/>
            <person name="Klenk H.P."/>
            <person name="Csonka L.N."/>
            <person name="Woyke T."/>
        </authorList>
    </citation>
    <scope>NUCLEOTIDE SEQUENCE [LARGE SCALE GENOMIC DNA]</scope>
    <source>
        <strain>ATCC BAA-138 / DSM 3043 / CIP 106854 / NCIMB 13768 / 1H11</strain>
    </source>
</reference>
<feature type="chain" id="PRO_1000068977" description="L-lactate dehydrogenase">
    <location>
        <begin position="1"/>
        <end position="392"/>
    </location>
</feature>
<feature type="domain" description="FMN hydroxy acid dehydrogenase" evidence="1">
    <location>
        <begin position="1"/>
        <end position="380"/>
    </location>
</feature>
<feature type="active site" description="Proton acceptor" evidence="1">
    <location>
        <position position="275"/>
    </location>
</feature>
<feature type="binding site" evidence="1">
    <location>
        <position position="24"/>
    </location>
    <ligand>
        <name>substrate</name>
    </ligand>
</feature>
<feature type="binding site" evidence="1">
    <location>
        <position position="106"/>
    </location>
    <ligand>
        <name>FMN</name>
        <dbReference type="ChEBI" id="CHEBI:58210"/>
    </ligand>
</feature>
<feature type="binding site" evidence="1">
    <location>
        <position position="127"/>
    </location>
    <ligand>
        <name>FMN</name>
        <dbReference type="ChEBI" id="CHEBI:58210"/>
    </ligand>
</feature>
<feature type="binding site" evidence="1">
    <location>
        <position position="129"/>
    </location>
    <ligand>
        <name>substrate</name>
    </ligand>
</feature>
<feature type="binding site" evidence="1">
    <location>
        <position position="155"/>
    </location>
    <ligand>
        <name>FMN</name>
        <dbReference type="ChEBI" id="CHEBI:58210"/>
    </ligand>
</feature>
<feature type="binding site" evidence="1">
    <location>
        <position position="164"/>
    </location>
    <ligand>
        <name>substrate</name>
    </ligand>
</feature>
<feature type="binding site" evidence="1">
    <location>
        <position position="251"/>
    </location>
    <ligand>
        <name>FMN</name>
        <dbReference type="ChEBI" id="CHEBI:58210"/>
    </ligand>
</feature>
<feature type="binding site" evidence="1">
    <location>
        <position position="278"/>
    </location>
    <ligand>
        <name>substrate</name>
    </ligand>
</feature>
<feature type="binding site" evidence="1">
    <location>
        <begin position="306"/>
        <end position="330"/>
    </location>
    <ligand>
        <name>FMN</name>
        <dbReference type="ChEBI" id="CHEBI:58210"/>
    </ligand>
</feature>
<sequence>MIISASTDYRHAAKRRLPPFLFHYADGGAYAEHTLRRNVEDLAGIALRQRVLKDMSHLSLETELFGEPLAMPVALAPVGLAGMYARRGEVQAARAAASKGIPFTLSTVSVCPIAEVASAIERPLWFQLYVLRDRGFMKHVLERAKAAGVKTLVFTVDMPVPGARYRDAHSGMSGKHGGLRRMLQAVTHPSWAWDVGLHGRPHDLGNVSDYRGQPTELEDYIAWLGNNFDPSISWKDLEWIREFWDGPMIIKGILDPEDARDAVRFGADGIVVSNHGGRQLDGVPSTARALPAIADAVKGDLAILADSGVRNGLDVVRMIAMGADTILLGRAYIYALATAGEAGVAHLLELFEKEMRVAMTLTGARSIAELGSDSLVTGSAAASIERTLSPSL</sequence>
<keyword id="KW-0997">Cell inner membrane</keyword>
<keyword id="KW-1003">Cell membrane</keyword>
<keyword id="KW-0285">Flavoprotein</keyword>
<keyword id="KW-0288">FMN</keyword>
<keyword id="KW-0472">Membrane</keyword>
<keyword id="KW-0560">Oxidoreductase</keyword>
<keyword id="KW-1185">Reference proteome</keyword>